<protein>
    <recommendedName>
        <fullName>NAD(P)H-flavin reductase</fullName>
        <ecNumber>1.5.1.-</ecNumber>
    </recommendedName>
    <alternativeName>
        <fullName>NAD(P)H:flavin oxidoreductase</fullName>
    </alternativeName>
</protein>
<gene>
    <name type="primary">fre</name>
</gene>
<sequence length="233" mass="26440">MTTLSCKVTSVEAITDTVYRVRLLPDSPFLFRAGQYLMVVMDERDKRPFSMASTPSEKEFIELHIGASELNLYAMAVMDRILDQKVINIDIPHGKAWFRKSSANPLLLIAGGTGFSYTRSILLTALEEQPKRHISMYWGGRESQHLYDLAELRLLTERYPNLKVIPVVEQSDNGWCGRTGTVLKAVLEDFGSLANYDIYIAGRFEMAKIARERFCSERDASADSMYGDAFEFI</sequence>
<organism>
    <name type="scientific">Photorhabdus luminescens</name>
    <name type="common">Xenorhabdus luminescens</name>
    <dbReference type="NCBI Taxonomy" id="29488"/>
    <lineage>
        <taxon>Bacteria</taxon>
        <taxon>Pseudomonadati</taxon>
        <taxon>Pseudomonadota</taxon>
        <taxon>Gammaproteobacteria</taxon>
        <taxon>Enterobacterales</taxon>
        <taxon>Morganellaceae</taxon>
        <taxon>Photorhabdus</taxon>
    </lineage>
</organism>
<comment type="function">
    <text>Involved in bioluminescence. It is a good supplier of reduced flavin mononucleotide (FMNH2) to the bioluminescence reaction. Preferably uses riboflavin as an electron acceptor when NADPH is used as an electron donor.</text>
</comment>
<comment type="similarity">
    <text evidence="3">Belongs to the Fre/LuxG FAD/NAD(P) flavoprotein oxidoreductase family.</text>
</comment>
<name>FRE_PHOLU</name>
<proteinExistence type="inferred from homology"/>
<accession>P43129</accession>
<evidence type="ECO:0000250" key="1"/>
<evidence type="ECO:0000255" key="2">
    <source>
        <dbReference type="PROSITE-ProRule" id="PRU00716"/>
    </source>
</evidence>
<evidence type="ECO:0000305" key="3"/>
<keyword id="KW-0274">FAD</keyword>
<keyword id="KW-0285">Flavoprotein</keyword>
<keyword id="KW-0455">Luminescence</keyword>
<keyword id="KW-0560">Oxidoreductase</keyword>
<dbReference type="EC" id="1.5.1.-"/>
<dbReference type="EMBL" id="D17745">
    <property type="protein sequence ID" value="BAA04597.1"/>
    <property type="molecule type" value="Genomic_DNA"/>
</dbReference>
<dbReference type="RefSeq" id="WP_049585178.1">
    <property type="nucleotide sequence ID" value="NZ_FMWJ01000008.1"/>
</dbReference>
<dbReference type="SMR" id="P43129"/>
<dbReference type="STRING" id="29488.KS18_11990"/>
<dbReference type="GeneID" id="45658137"/>
<dbReference type="OrthoDB" id="9806195at2"/>
<dbReference type="GO" id="GO:0016491">
    <property type="term" value="F:oxidoreductase activity"/>
    <property type="evidence" value="ECO:0007669"/>
    <property type="project" value="UniProtKB-KW"/>
</dbReference>
<dbReference type="GO" id="GO:0008218">
    <property type="term" value="P:bioluminescence"/>
    <property type="evidence" value="ECO:0007669"/>
    <property type="project" value="UniProtKB-KW"/>
</dbReference>
<dbReference type="CDD" id="cd06189">
    <property type="entry name" value="flavin_oxioreductase"/>
    <property type="match status" value="1"/>
</dbReference>
<dbReference type="Gene3D" id="3.40.50.80">
    <property type="entry name" value="Nucleotide-binding domain of ferredoxin-NADP reductase (FNR) module"/>
    <property type="match status" value="1"/>
</dbReference>
<dbReference type="Gene3D" id="2.40.30.10">
    <property type="entry name" value="Translation factors"/>
    <property type="match status" value="1"/>
</dbReference>
<dbReference type="InterPro" id="IPR017927">
    <property type="entry name" value="FAD-bd_FR_type"/>
</dbReference>
<dbReference type="InterPro" id="IPR039261">
    <property type="entry name" value="FNR_nucleotide-bd"/>
</dbReference>
<dbReference type="InterPro" id="IPR001433">
    <property type="entry name" value="OxRdtase_FAD/NAD-bd"/>
</dbReference>
<dbReference type="InterPro" id="IPR017938">
    <property type="entry name" value="Riboflavin_synthase-like_b-brl"/>
</dbReference>
<dbReference type="NCBIfam" id="NF005963">
    <property type="entry name" value="PRK08051.1"/>
    <property type="match status" value="1"/>
</dbReference>
<dbReference type="PANTHER" id="PTHR43644">
    <property type="entry name" value="NA(+)-TRANSLOCATING NADH-QUINONE REDUCTASE SUBUNIT"/>
    <property type="match status" value="1"/>
</dbReference>
<dbReference type="PANTHER" id="PTHR43644:SF1">
    <property type="entry name" value="NAD(P)H-FLAVIN REDUCTASE"/>
    <property type="match status" value="1"/>
</dbReference>
<dbReference type="Pfam" id="PF00175">
    <property type="entry name" value="NAD_binding_1"/>
    <property type="match status" value="1"/>
</dbReference>
<dbReference type="PRINTS" id="PR00410">
    <property type="entry name" value="PHEHYDRXLASE"/>
</dbReference>
<dbReference type="SUPFAM" id="SSF52343">
    <property type="entry name" value="Ferredoxin reductase-like, C-terminal NADP-linked domain"/>
    <property type="match status" value="1"/>
</dbReference>
<dbReference type="SUPFAM" id="SSF63380">
    <property type="entry name" value="Riboflavin synthase domain-like"/>
    <property type="match status" value="1"/>
</dbReference>
<dbReference type="PROSITE" id="PS51384">
    <property type="entry name" value="FAD_FR"/>
    <property type="match status" value="1"/>
</dbReference>
<reference key="1">
    <citation type="journal article" date="1994" name="J. Bacteriol.">
        <title>Identification of the genes encoding NAD(P)H-flavin oxidoreductases that are similar in sequence to Escherichia coli Fre in four species of luminous bacteria: Photorhabdus luminescens, Vibrio fischeri, Vibrio harveyi, and Vibrio orientalis.</title>
        <authorList>
            <person name="Zenno S."/>
            <person name="Saigo K."/>
        </authorList>
    </citation>
    <scope>NUCLEOTIDE SEQUENCE [GENOMIC DNA]</scope>
    <source>
        <strain>ATCC 29999 / DSM 3368 / BCRC 14801 / CCM 7077 / CIP 106429 / NCIMB 12670 / Hb</strain>
    </source>
</reference>
<feature type="initiator methionine" description="Removed" evidence="1">
    <location>
        <position position="1"/>
    </location>
</feature>
<feature type="chain" id="PRO_0000068148" description="NAD(P)H-flavin reductase">
    <location>
        <begin position="2"/>
        <end position="233"/>
    </location>
</feature>
<feature type="domain" description="FAD-binding FR-type" evidence="2">
    <location>
        <begin position="2"/>
        <end position="99"/>
    </location>
</feature>
<feature type="binding site" evidence="1">
    <location>
        <begin position="111"/>
        <end position="115"/>
    </location>
    <ligand>
        <name>pyridine</name>
        <dbReference type="ChEBI" id="CHEBI:16227"/>
    </ligand>
</feature>